<protein>
    <recommendedName>
        <fullName evidence="1">Large ribosomal subunit protein bL19</fullName>
    </recommendedName>
    <alternativeName>
        <fullName evidence="2">50S ribosomal protein L19</fullName>
    </alternativeName>
</protein>
<organism>
    <name type="scientific">Chlamydia caviae (strain ATCC VR-813 / DSM 19441 / 03DC25 / GPIC)</name>
    <name type="common">Chlamydophila caviae</name>
    <dbReference type="NCBI Taxonomy" id="227941"/>
    <lineage>
        <taxon>Bacteria</taxon>
        <taxon>Pseudomonadati</taxon>
        <taxon>Chlamydiota</taxon>
        <taxon>Chlamydiia</taxon>
        <taxon>Chlamydiales</taxon>
        <taxon>Chlamydiaceae</taxon>
        <taxon>Chlamydia/Chlamydophila group</taxon>
        <taxon>Chlamydia</taxon>
    </lineage>
</organism>
<reference key="1">
    <citation type="journal article" date="2003" name="Nucleic Acids Res.">
        <title>Genome sequence of Chlamydophila caviae (Chlamydia psittaci GPIC): examining the role of niche-specific genes in the evolution of the Chlamydiaceae.</title>
        <authorList>
            <person name="Read T.D."/>
            <person name="Myers G.S.A."/>
            <person name="Brunham R.C."/>
            <person name="Nelson W.C."/>
            <person name="Paulsen I.T."/>
            <person name="Heidelberg J.F."/>
            <person name="Holtzapple E.K."/>
            <person name="Khouri H.M."/>
            <person name="Federova N.B."/>
            <person name="Carty H.A."/>
            <person name="Umayam L.A."/>
            <person name="Haft D.H."/>
            <person name="Peterson J.D."/>
            <person name="Beanan M.J."/>
            <person name="White O."/>
            <person name="Salzberg S.L."/>
            <person name="Hsia R.-C."/>
            <person name="McClarty G."/>
            <person name="Rank R.G."/>
            <person name="Bavoil P.M."/>
            <person name="Fraser C.M."/>
        </authorList>
    </citation>
    <scope>NUCLEOTIDE SEQUENCE [LARGE SCALE GENOMIC DNA]</scope>
    <source>
        <strain>ATCC VR-813 / DSM 19441 / 03DC25 / GPIC</strain>
    </source>
</reference>
<feature type="chain" id="PRO_0000163435" description="Large ribosomal subunit protein bL19">
    <location>
        <begin position="1"/>
        <end position="121"/>
    </location>
</feature>
<dbReference type="EMBL" id="AE015925">
    <property type="protein sequence ID" value="AAP05397.1"/>
    <property type="molecule type" value="Genomic_DNA"/>
</dbReference>
<dbReference type="RefSeq" id="WP_011006612.1">
    <property type="nucleotide sequence ID" value="NC_003361.3"/>
</dbReference>
<dbReference type="SMR" id="Q822M6"/>
<dbReference type="STRING" id="227941.CCA_00655"/>
<dbReference type="KEGG" id="cca:CCA_00655"/>
<dbReference type="eggNOG" id="COG0335">
    <property type="taxonomic scope" value="Bacteria"/>
</dbReference>
<dbReference type="HOGENOM" id="CLU_103507_2_1_0"/>
<dbReference type="OrthoDB" id="9803541at2"/>
<dbReference type="Proteomes" id="UP000002193">
    <property type="component" value="Chromosome"/>
</dbReference>
<dbReference type="GO" id="GO:0022625">
    <property type="term" value="C:cytosolic large ribosomal subunit"/>
    <property type="evidence" value="ECO:0007669"/>
    <property type="project" value="TreeGrafter"/>
</dbReference>
<dbReference type="GO" id="GO:0003735">
    <property type="term" value="F:structural constituent of ribosome"/>
    <property type="evidence" value="ECO:0007669"/>
    <property type="project" value="InterPro"/>
</dbReference>
<dbReference type="GO" id="GO:0006412">
    <property type="term" value="P:translation"/>
    <property type="evidence" value="ECO:0007669"/>
    <property type="project" value="UniProtKB-UniRule"/>
</dbReference>
<dbReference type="Gene3D" id="2.30.30.790">
    <property type="match status" value="1"/>
</dbReference>
<dbReference type="HAMAP" id="MF_00402">
    <property type="entry name" value="Ribosomal_bL19"/>
    <property type="match status" value="1"/>
</dbReference>
<dbReference type="InterPro" id="IPR001857">
    <property type="entry name" value="Ribosomal_bL19"/>
</dbReference>
<dbReference type="InterPro" id="IPR018257">
    <property type="entry name" value="Ribosomal_bL19_CS"/>
</dbReference>
<dbReference type="InterPro" id="IPR038657">
    <property type="entry name" value="Ribosomal_bL19_sf"/>
</dbReference>
<dbReference type="InterPro" id="IPR008991">
    <property type="entry name" value="Translation_prot_SH3-like_sf"/>
</dbReference>
<dbReference type="NCBIfam" id="TIGR01024">
    <property type="entry name" value="rplS_bact"/>
    <property type="match status" value="1"/>
</dbReference>
<dbReference type="PANTHER" id="PTHR15680:SF9">
    <property type="entry name" value="LARGE RIBOSOMAL SUBUNIT PROTEIN BL19M"/>
    <property type="match status" value="1"/>
</dbReference>
<dbReference type="PANTHER" id="PTHR15680">
    <property type="entry name" value="RIBOSOMAL PROTEIN L19"/>
    <property type="match status" value="1"/>
</dbReference>
<dbReference type="Pfam" id="PF01245">
    <property type="entry name" value="Ribosomal_L19"/>
    <property type="match status" value="1"/>
</dbReference>
<dbReference type="PIRSF" id="PIRSF002191">
    <property type="entry name" value="Ribosomal_L19"/>
    <property type="match status" value="1"/>
</dbReference>
<dbReference type="PRINTS" id="PR00061">
    <property type="entry name" value="RIBOSOMALL19"/>
</dbReference>
<dbReference type="SUPFAM" id="SSF50104">
    <property type="entry name" value="Translation proteins SH3-like domain"/>
    <property type="match status" value="1"/>
</dbReference>
<dbReference type="PROSITE" id="PS01015">
    <property type="entry name" value="RIBOSOMAL_L19"/>
    <property type="match status" value="1"/>
</dbReference>
<evidence type="ECO:0000255" key="1">
    <source>
        <dbReference type="HAMAP-Rule" id="MF_00402"/>
    </source>
</evidence>
<evidence type="ECO:0000305" key="2"/>
<comment type="function">
    <text evidence="1">This protein is located at the 30S-50S ribosomal subunit interface and may play a role in the structure and function of the aminoacyl-tRNA binding site.</text>
</comment>
<comment type="similarity">
    <text evidence="1">Belongs to the bacterial ribosomal protein bL19 family.</text>
</comment>
<gene>
    <name evidence="1" type="primary">rplS</name>
    <name type="ordered locus">CCA_00655</name>
</gene>
<sequence>MGNLIKELQDEQLRKEALTDFRVGDTIRVATKIVDGGKERTQVFQGTVMARRGGGAGETVALHRVAYGEGMEKSFLLHSPKIVGIEVVKRGKVSRARLYYLKGKTGKAAKVKEYIGPRAPK</sequence>
<keyword id="KW-0687">Ribonucleoprotein</keyword>
<keyword id="KW-0689">Ribosomal protein</keyword>
<accession>Q822M6</accession>
<name>RL19_CHLCV</name>
<proteinExistence type="inferred from homology"/>